<protein>
    <recommendedName>
        <fullName>Cytochrome b</fullName>
    </recommendedName>
    <alternativeName>
        <fullName>Complex III subunit 3</fullName>
    </alternativeName>
    <alternativeName>
        <fullName>Complex III subunit III</fullName>
    </alternativeName>
    <alternativeName>
        <fullName>Cytochrome b-c1 complex subunit 3</fullName>
    </alternativeName>
    <alternativeName>
        <fullName>Ubiquinol-cytochrome-c reductase complex cytochrome b subunit</fullName>
    </alternativeName>
</protein>
<evidence type="ECO:0000250" key="1"/>
<evidence type="ECO:0000250" key="2">
    <source>
        <dbReference type="UniProtKB" id="P00157"/>
    </source>
</evidence>
<evidence type="ECO:0000255" key="3">
    <source>
        <dbReference type="PROSITE-ProRule" id="PRU00967"/>
    </source>
</evidence>
<evidence type="ECO:0000255" key="4">
    <source>
        <dbReference type="PROSITE-ProRule" id="PRU00968"/>
    </source>
</evidence>
<reference key="1">
    <citation type="journal article" date="2001" name="Mol. Phylogenet. Evol.">
        <title>Molecular systematics of bats of the genus Myotis (Vespertilionidae) suggests deterministic ecomorphological convergences.</title>
        <authorList>
            <person name="Ruedi M."/>
            <person name="Mayer F."/>
        </authorList>
    </citation>
    <scope>NUCLEOTIDE SEQUENCE [GENOMIC DNA]</scope>
    <source>
        <strain>Isolate FMNH 147067</strain>
    </source>
</reference>
<gene>
    <name type="primary">MT-CYB</name>
    <name type="synonym">COB</name>
    <name type="synonym">CYTB</name>
    <name type="synonym">MTCYB</name>
</gene>
<accession>Q957C3</accession>
<sequence length="379" mass="42786">MTNIRKSHPLXKIINSSFIDLPAPSNISSWWNFGSLLGICLALQILTGLFLAMHYTSDTATAFNSVTHICRDXNYGWVLRYMHANGASMFFICLYLHVGRGLYYGSYMYTETWNIGVILLFAVMATAFMGYVLPWGQMSFWGTTVITNLLSAIPYIGTNLVEWIWGGFSVDKATLTRFFAFHFLLPFIIAAMVMVHLLFLHETGSNNPTGIPANTDMIPFHPYYTIKDILGLLLMITALLTLVLFSPDLLGDPDNYTPANPLNTPPHIKPEWYFLFAYAILRSIPNKLGGVLALVLSILILVIVPLLHTSKQRSMTFRPLSQCLFWLLTADLFTLTWIGGQPVEYPYVIIGQLASILYFSIXIILMPLTSLMENHLLKW</sequence>
<feature type="chain" id="PRO_0000254717" description="Cytochrome b">
    <location>
        <begin position="1"/>
        <end position="379"/>
    </location>
</feature>
<feature type="transmembrane region" description="Helical" evidence="2">
    <location>
        <begin position="33"/>
        <end position="53"/>
    </location>
</feature>
<feature type="transmembrane region" description="Helical" evidence="2">
    <location>
        <begin position="77"/>
        <end position="98"/>
    </location>
</feature>
<feature type="transmembrane region" description="Helical" evidence="2">
    <location>
        <begin position="113"/>
        <end position="133"/>
    </location>
</feature>
<feature type="transmembrane region" description="Helical" evidence="2">
    <location>
        <begin position="178"/>
        <end position="198"/>
    </location>
</feature>
<feature type="transmembrane region" description="Helical" evidence="2">
    <location>
        <begin position="226"/>
        <end position="246"/>
    </location>
</feature>
<feature type="transmembrane region" description="Helical" evidence="2">
    <location>
        <begin position="288"/>
        <end position="308"/>
    </location>
</feature>
<feature type="transmembrane region" description="Helical" evidence="2">
    <location>
        <begin position="320"/>
        <end position="340"/>
    </location>
</feature>
<feature type="transmembrane region" description="Helical" evidence="2">
    <location>
        <begin position="347"/>
        <end position="367"/>
    </location>
</feature>
<feature type="binding site" description="axial binding residue" evidence="2">
    <location>
        <position position="83"/>
    </location>
    <ligand>
        <name>heme b</name>
        <dbReference type="ChEBI" id="CHEBI:60344"/>
        <label>b562</label>
    </ligand>
    <ligandPart>
        <name>Fe</name>
        <dbReference type="ChEBI" id="CHEBI:18248"/>
    </ligandPart>
</feature>
<feature type="binding site" description="axial binding residue" evidence="2">
    <location>
        <position position="97"/>
    </location>
    <ligand>
        <name>heme b</name>
        <dbReference type="ChEBI" id="CHEBI:60344"/>
        <label>b566</label>
    </ligand>
    <ligandPart>
        <name>Fe</name>
        <dbReference type="ChEBI" id="CHEBI:18248"/>
    </ligandPart>
</feature>
<feature type="binding site" description="axial binding residue" evidence="2">
    <location>
        <position position="182"/>
    </location>
    <ligand>
        <name>heme b</name>
        <dbReference type="ChEBI" id="CHEBI:60344"/>
        <label>b562</label>
    </ligand>
    <ligandPart>
        <name>Fe</name>
        <dbReference type="ChEBI" id="CHEBI:18248"/>
    </ligandPart>
</feature>
<feature type="binding site" description="axial binding residue" evidence="2">
    <location>
        <position position="196"/>
    </location>
    <ligand>
        <name>heme b</name>
        <dbReference type="ChEBI" id="CHEBI:60344"/>
        <label>b566</label>
    </ligand>
    <ligandPart>
        <name>Fe</name>
        <dbReference type="ChEBI" id="CHEBI:18248"/>
    </ligandPart>
</feature>
<feature type="binding site" evidence="2">
    <location>
        <position position="201"/>
    </location>
    <ligand>
        <name>a ubiquinone</name>
        <dbReference type="ChEBI" id="CHEBI:16389"/>
    </ligand>
</feature>
<keyword id="KW-0249">Electron transport</keyword>
<keyword id="KW-0349">Heme</keyword>
<keyword id="KW-0408">Iron</keyword>
<keyword id="KW-0472">Membrane</keyword>
<keyword id="KW-0479">Metal-binding</keyword>
<keyword id="KW-0496">Mitochondrion</keyword>
<keyword id="KW-0999">Mitochondrion inner membrane</keyword>
<keyword id="KW-0679">Respiratory chain</keyword>
<keyword id="KW-0812">Transmembrane</keyword>
<keyword id="KW-1133">Transmembrane helix</keyword>
<keyword id="KW-0813">Transport</keyword>
<keyword id="KW-0830">Ubiquinone</keyword>
<dbReference type="EMBL" id="AF376839">
    <property type="protein sequence ID" value="AAK57658.1"/>
    <property type="molecule type" value="Genomic_DNA"/>
</dbReference>
<dbReference type="GO" id="GO:0005743">
    <property type="term" value="C:mitochondrial inner membrane"/>
    <property type="evidence" value="ECO:0007669"/>
    <property type="project" value="UniProtKB-SubCell"/>
</dbReference>
<dbReference type="GO" id="GO:0045275">
    <property type="term" value="C:respiratory chain complex III"/>
    <property type="evidence" value="ECO:0007669"/>
    <property type="project" value="InterPro"/>
</dbReference>
<dbReference type="GO" id="GO:0046872">
    <property type="term" value="F:metal ion binding"/>
    <property type="evidence" value="ECO:0007669"/>
    <property type="project" value="UniProtKB-KW"/>
</dbReference>
<dbReference type="GO" id="GO:0008121">
    <property type="term" value="F:ubiquinol-cytochrome-c reductase activity"/>
    <property type="evidence" value="ECO:0007669"/>
    <property type="project" value="InterPro"/>
</dbReference>
<dbReference type="GO" id="GO:0006122">
    <property type="term" value="P:mitochondrial electron transport, ubiquinol to cytochrome c"/>
    <property type="evidence" value="ECO:0007669"/>
    <property type="project" value="TreeGrafter"/>
</dbReference>
<dbReference type="CDD" id="cd00290">
    <property type="entry name" value="cytochrome_b_C"/>
    <property type="match status" value="1"/>
</dbReference>
<dbReference type="CDD" id="cd00284">
    <property type="entry name" value="Cytochrome_b_N"/>
    <property type="match status" value="1"/>
</dbReference>
<dbReference type="FunFam" id="1.20.810.10:FF:000002">
    <property type="entry name" value="Cytochrome b"/>
    <property type="match status" value="1"/>
</dbReference>
<dbReference type="Gene3D" id="1.20.810.10">
    <property type="entry name" value="Cytochrome Bc1 Complex, Chain C"/>
    <property type="match status" value="1"/>
</dbReference>
<dbReference type="InterPro" id="IPR005798">
    <property type="entry name" value="Cyt_b/b6_C"/>
</dbReference>
<dbReference type="InterPro" id="IPR036150">
    <property type="entry name" value="Cyt_b/b6_C_sf"/>
</dbReference>
<dbReference type="InterPro" id="IPR005797">
    <property type="entry name" value="Cyt_b/b6_N"/>
</dbReference>
<dbReference type="InterPro" id="IPR027387">
    <property type="entry name" value="Cytb/b6-like_sf"/>
</dbReference>
<dbReference type="InterPro" id="IPR030689">
    <property type="entry name" value="Cytochrome_b"/>
</dbReference>
<dbReference type="InterPro" id="IPR048260">
    <property type="entry name" value="Cytochrome_b_C_euk/bac"/>
</dbReference>
<dbReference type="InterPro" id="IPR048259">
    <property type="entry name" value="Cytochrome_b_N_euk/bac"/>
</dbReference>
<dbReference type="InterPro" id="IPR016174">
    <property type="entry name" value="Di-haem_cyt_TM"/>
</dbReference>
<dbReference type="PANTHER" id="PTHR19271">
    <property type="entry name" value="CYTOCHROME B"/>
    <property type="match status" value="1"/>
</dbReference>
<dbReference type="PANTHER" id="PTHR19271:SF16">
    <property type="entry name" value="CYTOCHROME B"/>
    <property type="match status" value="1"/>
</dbReference>
<dbReference type="Pfam" id="PF00032">
    <property type="entry name" value="Cytochrom_B_C"/>
    <property type="match status" value="1"/>
</dbReference>
<dbReference type="Pfam" id="PF00033">
    <property type="entry name" value="Cytochrome_B"/>
    <property type="match status" value="1"/>
</dbReference>
<dbReference type="PIRSF" id="PIRSF038885">
    <property type="entry name" value="COB"/>
    <property type="match status" value="1"/>
</dbReference>
<dbReference type="SUPFAM" id="SSF81648">
    <property type="entry name" value="a domain/subunit of cytochrome bc1 complex (Ubiquinol-cytochrome c reductase)"/>
    <property type="match status" value="1"/>
</dbReference>
<dbReference type="SUPFAM" id="SSF81342">
    <property type="entry name" value="Transmembrane di-heme cytochromes"/>
    <property type="match status" value="1"/>
</dbReference>
<dbReference type="PROSITE" id="PS51003">
    <property type="entry name" value="CYTB_CTER"/>
    <property type="match status" value="1"/>
</dbReference>
<dbReference type="PROSITE" id="PS51002">
    <property type="entry name" value="CYTB_NTER"/>
    <property type="match status" value="1"/>
</dbReference>
<organism>
    <name type="scientific">Myotis albescens</name>
    <name type="common">Silver-tipped myotis</name>
    <name type="synonym">Vespertilio albescens</name>
    <dbReference type="NCBI Taxonomy" id="159322"/>
    <lineage>
        <taxon>Eukaryota</taxon>
        <taxon>Metazoa</taxon>
        <taxon>Chordata</taxon>
        <taxon>Craniata</taxon>
        <taxon>Vertebrata</taxon>
        <taxon>Euteleostomi</taxon>
        <taxon>Mammalia</taxon>
        <taxon>Eutheria</taxon>
        <taxon>Laurasiatheria</taxon>
        <taxon>Chiroptera</taxon>
        <taxon>Yangochiroptera</taxon>
        <taxon>Vespertilionidae</taxon>
        <taxon>Myotis</taxon>
    </lineage>
</organism>
<comment type="function">
    <text evidence="2">Component of the ubiquinol-cytochrome c reductase complex (complex III or cytochrome b-c1 complex) that is part of the mitochondrial respiratory chain. The b-c1 complex mediates electron transfer from ubiquinol to cytochrome c. Contributes to the generation of a proton gradient across the mitochondrial membrane that is then used for ATP synthesis.</text>
</comment>
<comment type="cofactor">
    <cofactor evidence="2">
        <name>heme b</name>
        <dbReference type="ChEBI" id="CHEBI:60344"/>
    </cofactor>
    <text evidence="2">Binds 2 heme b groups non-covalently.</text>
</comment>
<comment type="subunit">
    <text evidence="2">The cytochrome bc1 complex contains 11 subunits: 3 respiratory subunits (MT-CYB, CYC1 and UQCRFS1), 2 core proteins (UQCRC1 and UQCRC2) and 6 low-molecular weight proteins (UQCRH/QCR6, UQCRB/QCR7, UQCRQ/QCR8, UQCR10/QCR9, UQCR11/QCR10 and a cleavage product of UQCRFS1). This cytochrome bc1 complex then forms a dimer.</text>
</comment>
<comment type="subcellular location">
    <subcellularLocation>
        <location evidence="2">Mitochondrion inner membrane</location>
        <topology evidence="2">Multi-pass membrane protein</topology>
    </subcellularLocation>
</comment>
<comment type="miscellaneous">
    <text evidence="1">Heme 1 (or BL or b562) is low-potential and absorbs at about 562 nm, and heme 2 (or BH or b566) is high-potential and absorbs at about 566 nm.</text>
</comment>
<comment type="similarity">
    <text evidence="3 4">Belongs to the cytochrome b family.</text>
</comment>
<comment type="caution">
    <text evidence="2">The full-length protein contains only eight transmembrane helices, not nine as predicted by bioinformatics tools.</text>
</comment>
<geneLocation type="mitochondrion"/>
<proteinExistence type="inferred from homology"/>
<name>CYB_MYOAL</name>